<accession>A6TTJ8</accession>
<name>GATA_ALKMQ</name>
<gene>
    <name evidence="1" type="primary">gatA</name>
    <name type="ordered locus">Amet_3388</name>
</gene>
<protein>
    <recommendedName>
        <fullName evidence="1">Glutamyl-tRNA(Gln) amidotransferase subunit A</fullName>
        <shortName evidence="1">Glu-ADT subunit A</shortName>
        <ecNumber evidence="1">6.3.5.7</ecNumber>
    </recommendedName>
</protein>
<keyword id="KW-0067">ATP-binding</keyword>
<keyword id="KW-0436">Ligase</keyword>
<keyword id="KW-0547">Nucleotide-binding</keyword>
<keyword id="KW-0648">Protein biosynthesis</keyword>
<keyword id="KW-1185">Reference proteome</keyword>
<organism>
    <name type="scientific">Alkaliphilus metalliredigens (strain QYMF)</name>
    <dbReference type="NCBI Taxonomy" id="293826"/>
    <lineage>
        <taxon>Bacteria</taxon>
        <taxon>Bacillati</taxon>
        <taxon>Bacillota</taxon>
        <taxon>Clostridia</taxon>
        <taxon>Peptostreptococcales</taxon>
        <taxon>Natronincolaceae</taxon>
        <taxon>Alkaliphilus</taxon>
    </lineage>
</organism>
<sequence length="491" mass="53458">MKIEEMTIMDIRKGYVQKQFTVKDVVQGYIDRIKELDGKINAFITLCEESALMEAAVLDEKLSRGEEIGLLGGIPVAIKDNMCTQGIKTSCASEMLADFIPPYDATIVKKLRAAGAIIIGKTNMDEFAMGSSTENSAFKVTKNPWDLTKVPGGSSGGSAAALAAGFAPLTIGSDTGGSIRQPAAFCGTVGLKPTYGLVSRFGLIAFASSLDQIGPFTKTVKDCALSLQVMQGNDPLDSTSIQQEPMDDYVKDLDKGVKGLKVGIPKEFFQEGLNIEISDSIKEAIKVLEQLGAVVEEFSLPVTDSGLSAYYIISSAEASSNLARYDGVRYGHRAAVYEGIEEMMLNSRSEGFGKEVKRRIMLGTYVLSSGYYDAYYKKAMDFRKKTRNVFKKAFESYDVILTPTSPVLPFTIGEKTGDPLEMYLADIYTVNVNIAGVPAISIPCGFSKEKLPIGLQLIGDHYSEKKLLQAAYGLEQELGIFKEMPQQREVK</sequence>
<comment type="function">
    <text evidence="1">Allows the formation of correctly charged Gln-tRNA(Gln) through the transamidation of misacylated Glu-tRNA(Gln) in organisms which lack glutaminyl-tRNA synthetase. The reaction takes place in the presence of glutamine and ATP through an activated gamma-phospho-Glu-tRNA(Gln).</text>
</comment>
<comment type="catalytic activity">
    <reaction evidence="1">
        <text>L-glutamyl-tRNA(Gln) + L-glutamine + ATP + H2O = L-glutaminyl-tRNA(Gln) + L-glutamate + ADP + phosphate + H(+)</text>
        <dbReference type="Rhea" id="RHEA:17521"/>
        <dbReference type="Rhea" id="RHEA-COMP:9681"/>
        <dbReference type="Rhea" id="RHEA-COMP:9684"/>
        <dbReference type="ChEBI" id="CHEBI:15377"/>
        <dbReference type="ChEBI" id="CHEBI:15378"/>
        <dbReference type="ChEBI" id="CHEBI:29985"/>
        <dbReference type="ChEBI" id="CHEBI:30616"/>
        <dbReference type="ChEBI" id="CHEBI:43474"/>
        <dbReference type="ChEBI" id="CHEBI:58359"/>
        <dbReference type="ChEBI" id="CHEBI:78520"/>
        <dbReference type="ChEBI" id="CHEBI:78521"/>
        <dbReference type="ChEBI" id="CHEBI:456216"/>
        <dbReference type="EC" id="6.3.5.7"/>
    </reaction>
</comment>
<comment type="subunit">
    <text evidence="1">Heterotrimer of A, B and C subunits.</text>
</comment>
<comment type="similarity">
    <text evidence="1">Belongs to the amidase family. GatA subfamily.</text>
</comment>
<proteinExistence type="inferred from homology"/>
<evidence type="ECO:0000255" key="1">
    <source>
        <dbReference type="HAMAP-Rule" id="MF_00120"/>
    </source>
</evidence>
<reference key="1">
    <citation type="journal article" date="2016" name="Genome Announc.">
        <title>Complete genome sequence of Alkaliphilus metalliredigens strain QYMF, an alkaliphilic and metal-reducing bacterium isolated from borax-contaminated leachate ponds.</title>
        <authorList>
            <person name="Hwang C."/>
            <person name="Copeland A."/>
            <person name="Lucas S."/>
            <person name="Lapidus A."/>
            <person name="Barry K."/>
            <person name="Detter J.C."/>
            <person name="Glavina Del Rio T."/>
            <person name="Hammon N."/>
            <person name="Israni S."/>
            <person name="Dalin E."/>
            <person name="Tice H."/>
            <person name="Pitluck S."/>
            <person name="Chertkov O."/>
            <person name="Brettin T."/>
            <person name="Bruce D."/>
            <person name="Han C."/>
            <person name="Schmutz J."/>
            <person name="Larimer F."/>
            <person name="Land M.L."/>
            <person name="Hauser L."/>
            <person name="Kyrpides N."/>
            <person name="Mikhailova N."/>
            <person name="Ye Q."/>
            <person name="Zhou J."/>
            <person name="Richardson P."/>
            <person name="Fields M.W."/>
        </authorList>
    </citation>
    <scope>NUCLEOTIDE SEQUENCE [LARGE SCALE GENOMIC DNA]</scope>
    <source>
        <strain>QYMF</strain>
    </source>
</reference>
<feature type="chain" id="PRO_1000057793" description="Glutamyl-tRNA(Gln) amidotransferase subunit A">
    <location>
        <begin position="1"/>
        <end position="491"/>
    </location>
</feature>
<feature type="active site" description="Charge relay system" evidence="1">
    <location>
        <position position="79"/>
    </location>
</feature>
<feature type="active site" description="Charge relay system" evidence="1">
    <location>
        <position position="154"/>
    </location>
</feature>
<feature type="active site" description="Acyl-ester intermediate" evidence="1">
    <location>
        <position position="178"/>
    </location>
</feature>
<dbReference type="EC" id="6.3.5.7" evidence="1"/>
<dbReference type="EMBL" id="CP000724">
    <property type="protein sequence ID" value="ABR49516.1"/>
    <property type="molecule type" value="Genomic_DNA"/>
</dbReference>
<dbReference type="RefSeq" id="WP_012064479.1">
    <property type="nucleotide sequence ID" value="NC_009633.1"/>
</dbReference>
<dbReference type="SMR" id="A6TTJ8"/>
<dbReference type="STRING" id="293826.Amet_3388"/>
<dbReference type="KEGG" id="amt:Amet_3388"/>
<dbReference type="eggNOG" id="COG0154">
    <property type="taxonomic scope" value="Bacteria"/>
</dbReference>
<dbReference type="HOGENOM" id="CLU_009600_0_3_9"/>
<dbReference type="OrthoDB" id="9811471at2"/>
<dbReference type="Proteomes" id="UP000001572">
    <property type="component" value="Chromosome"/>
</dbReference>
<dbReference type="GO" id="GO:0030956">
    <property type="term" value="C:glutamyl-tRNA(Gln) amidotransferase complex"/>
    <property type="evidence" value="ECO:0007669"/>
    <property type="project" value="InterPro"/>
</dbReference>
<dbReference type="GO" id="GO:0005524">
    <property type="term" value="F:ATP binding"/>
    <property type="evidence" value="ECO:0007669"/>
    <property type="project" value="UniProtKB-KW"/>
</dbReference>
<dbReference type="GO" id="GO:0050567">
    <property type="term" value="F:glutaminyl-tRNA synthase (glutamine-hydrolyzing) activity"/>
    <property type="evidence" value="ECO:0007669"/>
    <property type="project" value="UniProtKB-UniRule"/>
</dbReference>
<dbReference type="GO" id="GO:0006412">
    <property type="term" value="P:translation"/>
    <property type="evidence" value="ECO:0007669"/>
    <property type="project" value="UniProtKB-UniRule"/>
</dbReference>
<dbReference type="Gene3D" id="3.90.1300.10">
    <property type="entry name" value="Amidase signature (AS) domain"/>
    <property type="match status" value="1"/>
</dbReference>
<dbReference type="HAMAP" id="MF_00120">
    <property type="entry name" value="GatA"/>
    <property type="match status" value="1"/>
</dbReference>
<dbReference type="InterPro" id="IPR000120">
    <property type="entry name" value="Amidase"/>
</dbReference>
<dbReference type="InterPro" id="IPR020556">
    <property type="entry name" value="Amidase_CS"/>
</dbReference>
<dbReference type="InterPro" id="IPR023631">
    <property type="entry name" value="Amidase_dom"/>
</dbReference>
<dbReference type="InterPro" id="IPR036928">
    <property type="entry name" value="AS_sf"/>
</dbReference>
<dbReference type="InterPro" id="IPR004412">
    <property type="entry name" value="GatA"/>
</dbReference>
<dbReference type="NCBIfam" id="TIGR00132">
    <property type="entry name" value="gatA"/>
    <property type="match status" value="1"/>
</dbReference>
<dbReference type="PANTHER" id="PTHR11895:SF151">
    <property type="entry name" value="GLUTAMYL-TRNA(GLN) AMIDOTRANSFERASE SUBUNIT A"/>
    <property type="match status" value="1"/>
</dbReference>
<dbReference type="PANTHER" id="PTHR11895">
    <property type="entry name" value="TRANSAMIDASE"/>
    <property type="match status" value="1"/>
</dbReference>
<dbReference type="Pfam" id="PF01425">
    <property type="entry name" value="Amidase"/>
    <property type="match status" value="1"/>
</dbReference>
<dbReference type="SUPFAM" id="SSF75304">
    <property type="entry name" value="Amidase signature (AS) enzymes"/>
    <property type="match status" value="1"/>
</dbReference>
<dbReference type="PROSITE" id="PS00571">
    <property type="entry name" value="AMIDASES"/>
    <property type="match status" value="1"/>
</dbReference>